<dbReference type="EMBL" id="AE006641">
    <property type="protein sequence ID" value="AAK40680.1"/>
    <property type="status" value="ALT_INIT"/>
    <property type="molecule type" value="Genomic_DNA"/>
</dbReference>
<dbReference type="PIR" id="A90178">
    <property type="entry name" value="A90178"/>
</dbReference>
<dbReference type="RefSeq" id="WP_009990642.1">
    <property type="nucleotide sequence ID" value="NC_002754.1"/>
</dbReference>
<dbReference type="SMR" id="P58222"/>
<dbReference type="FunCoup" id="P58222">
    <property type="interactions" value="64"/>
</dbReference>
<dbReference type="STRING" id="273057.SSO5668"/>
<dbReference type="PaxDb" id="273057-SSO5668"/>
<dbReference type="EnsemblBacteria" id="AAK40680">
    <property type="protein sequence ID" value="AAK40680"/>
    <property type="gene ID" value="SSO5668"/>
</dbReference>
<dbReference type="GeneID" id="44129321"/>
<dbReference type="KEGG" id="sso:SSO5668"/>
<dbReference type="PATRIC" id="fig|273057.12.peg.341"/>
<dbReference type="eggNOG" id="arCOG04175">
    <property type="taxonomic scope" value="Archaea"/>
</dbReference>
<dbReference type="HOGENOM" id="CLU_177460_0_0_2"/>
<dbReference type="InParanoid" id="P58222"/>
<dbReference type="Proteomes" id="UP000001974">
    <property type="component" value="Chromosome"/>
</dbReference>
<dbReference type="GO" id="GO:1990904">
    <property type="term" value="C:ribonucleoprotein complex"/>
    <property type="evidence" value="ECO:0007669"/>
    <property type="project" value="UniProtKB-KW"/>
</dbReference>
<dbReference type="GO" id="GO:0005840">
    <property type="term" value="C:ribosome"/>
    <property type="evidence" value="ECO:0007669"/>
    <property type="project" value="UniProtKB-KW"/>
</dbReference>
<dbReference type="GO" id="GO:0070180">
    <property type="term" value="F:large ribosomal subunit rRNA binding"/>
    <property type="evidence" value="ECO:0007669"/>
    <property type="project" value="UniProtKB-UniRule"/>
</dbReference>
<dbReference type="GO" id="GO:0003735">
    <property type="term" value="F:structural constituent of ribosome"/>
    <property type="evidence" value="ECO:0007669"/>
    <property type="project" value="InterPro"/>
</dbReference>
<dbReference type="GO" id="GO:0006412">
    <property type="term" value="P:translation"/>
    <property type="evidence" value="ECO:0007669"/>
    <property type="project" value="UniProtKB-UniRule"/>
</dbReference>
<dbReference type="Gene3D" id="3.10.20.10">
    <property type="match status" value="1"/>
</dbReference>
<dbReference type="HAMAP" id="MF_00273">
    <property type="entry name" value="Ribosomal_eL20"/>
    <property type="match status" value="1"/>
</dbReference>
<dbReference type="InterPro" id="IPR028877">
    <property type="entry name" value="Ribosomal_eL20"/>
</dbReference>
<dbReference type="InterPro" id="IPR023573">
    <property type="entry name" value="Ribosomal_eL20_dom"/>
</dbReference>
<dbReference type="NCBIfam" id="NF001981">
    <property type="entry name" value="PRK00773.1-1"/>
    <property type="match status" value="1"/>
</dbReference>
<dbReference type="Pfam" id="PF01775">
    <property type="entry name" value="Ribosomal_L18A"/>
    <property type="match status" value="1"/>
</dbReference>
<dbReference type="SUPFAM" id="SSF160374">
    <property type="entry name" value="RplX-like"/>
    <property type="match status" value="1"/>
</dbReference>
<keyword id="KW-1185">Reference proteome</keyword>
<keyword id="KW-0687">Ribonucleoprotein</keyword>
<keyword id="KW-0689">Ribosomal protein</keyword>
<keyword id="KW-0694">RNA-binding</keyword>
<keyword id="KW-0699">rRNA-binding</keyword>
<organism>
    <name type="scientific">Saccharolobus solfataricus (strain ATCC 35092 / DSM 1617 / JCM 11322 / P2)</name>
    <name type="common">Sulfolobus solfataricus</name>
    <dbReference type="NCBI Taxonomy" id="273057"/>
    <lineage>
        <taxon>Archaea</taxon>
        <taxon>Thermoproteota</taxon>
        <taxon>Thermoprotei</taxon>
        <taxon>Sulfolobales</taxon>
        <taxon>Sulfolobaceae</taxon>
        <taxon>Saccharolobus</taxon>
    </lineage>
</organism>
<comment type="subunit">
    <text evidence="1">Part of the 50S ribosomal subunit. Binds 23S rRNA.</text>
</comment>
<comment type="similarity">
    <text evidence="1">Belongs to the eukaryotic ribosomal protein eL20 family.</text>
</comment>
<comment type="sequence caution" evidence="2">
    <conflict type="erroneous initiation">
        <sequence resource="EMBL-CDS" id="AAK40680"/>
    </conflict>
    <text>Extended N-terminus.</text>
</comment>
<protein>
    <recommendedName>
        <fullName evidence="1">Large ribosomal subunit protein eL20</fullName>
    </recommendedName>
    <alternativeName>
        <fullName evidence="2">50S ribosomal protein L18Ae</fullName>
    </alternativeName>
    <alternativeName>
        <fullName evidence="1">50S ribosomal protein L20e</fullName>
    </alternativeName>
    <alternativeName>
        <fullName evidence="1">50S ribosomal protein LX</fullName>
    </alternativeName>
</protein>
<accession>P58222</accession>
<name>RL18A_SACS2</name>
<sequence length="86" mass="10232">MSGIKFYLVKGTALFGESHYPEKRKFVKIVRALNEKQAIEYVYSHFGSKNKIKRYNIKIEQISEIKEEEIPDRRIRELAKVDKIIM</sequence>
<evidence type="ECO:0000255" key="1">
    <source>
        <dbReference type="HAMAP-Rule" id="MF_00273"/>
    </source>
</evidence>
<evidence type="ECO:0000305" key="2"/>
<reference key="1">
    <citation type="journal article" date="2001" name="Proc. Natl. Acad. Sci. U.S.A.">
        <title>The complete genome of the crenarchaeon Sulfolobus solfataricus P2.</title>
        <authorList>
            <person name="She Q."/>
            <person name="Singh R.K."/>
            <person name="Confalonieri F."/>
            <person name="Zivanovic Y."/>
            <person name="Allard G."/>
            <person name="Awayez M.J."/>
            <person name="Chan-Weiher C.C.-Y."/>
            <person name="Clausen I.G."/>
            <person name="Curtis B.A."/>
            <person name="De Moors A."/>
            <person name="Erauso G."/>
            <person name="Fletcher C."/>
            <person name="Gordon P.M.K."/>
            <person name="Heikamp-de Jong I."/>
            <person name="Jeffries A.C."/>
            <person name="Kozera C.J."/>
            <person name="Medina N."/>
            <person name="Peng X."/>
            <person name="Thi-Ngoc H.P."/>
            <person name="Redder P."/>
            <person name="Schenk M.E."/>
            <person name="Theriault C."/>
            <person name="Tolstrup N."/>
            <person name="Charlebois R.L."/>
            <person name="Doolittle W.F."/>
            <person name="Duguet M."/>
            <person name="Gaasterland T."/>
            <person name="Garrett R.A."/>
            <person name="Ragan M.A."/>
            <person name="Sensen C.W."/>
            <person name="Van der Oost J."/>
        </authorList>
    </citation>
    <scope>NUCLEOTIDE SEQUENCE [LARGE SCALE GENOMIC DNA]</scope>
    <source>
        <strain>ATCC 35092 / DSM 1617 / JCM 11322 / P2</strain>
    </source>
</reference>
<proteinExistence type="inferred from homology"/>
<gene>
    <name evidence="1" type="primary">rpl18a</name>
    <name evidence="1" type="synonym">rpl20e</name>
    <name evidence="1" type="synonym">rplX</name>
    <name type="ordered locus">SSO5668</name>
</gene>
<feature type="chain" id="PRO_0000153710" description="Large ribosomal subunit protein eL20">
    <location>
        <begin position="1"/>
        <end position="86"/>
    </location>
</feature>